<comment type="function">
    <text>Ferredoxins are iron-sulfur proteins that transfer electrons in a wide variety of metabolic reactions.</text>
</comment>
<comment type="cofactor">
    <cofactor>
        <name>[4Fe-4S] cluster</name>
        <dbReference type="ChEBI" id="CHEBI:49883"/>
    </cofactor>
    <text>Binds 1 [4Fe-4S] cluster.</text>
</comment>
<comment type="cofactor">
    <cofactor>
        <name>[3Fe-4S] cluster</name>
        <dbReference type="ChEBI" id="CHEBI:21137"/>
    </cofactor>
    <text>Binds 1 [3Fe-4S] cluster.</text>
</comment>
<proteinExistence type="inferred from homology"/>
<feature type="initiator methionine" description="Removed" evidence="1">
    <location>
        <position position="1"/>
    </location>
</feature>
<feature type="chain" id="PRO_0000159097" description="Ferredoxin-2">
    <location>
        <begin position="2"/>
        <end position="112"/>
    </location>
</feature>
<feature type="domain" description="4Fe-4S ferredoxin-type 1" evidence="2">
    <location>
        <begin position="2"/>
        <end position="30"/>
    </location>
</feature>
<feature type="domain" description="4Fe-4S ferredoxin-type 2" evidence="2">
    <location>
        <begin position="31"/>
        <end position="60"/>
    </location>
</feature>
<feature type="region of interest" description="Disordered" evidence="3">
    <location>
        <begin position="85"/>
        <end position="112"/>
    </location>
</feature>
<feature type="compositionally biased region" description="Basic and acidic residues" evidence="3">
    <location>
        <begin position="85"/>
        <end position="103"/>
    </location>
</feature>
<feature type="binding site" evidence="1">
    <location>
        <position position="9"/>
    </location>
    <ligand>
        <name>[3Fe-4S] cluster</name>
        <dbReference type="ChEBI" id="CHEBI:21137"/>
    </ligand>
</feature>
<feature type="binding site" evidence="1">
    <location>
        <position position="17"/>
    </location>
    <ligand>
        <name>[3Fe-4S] cluster</name>
        <dbReference type="ChEBI" id="CHEBI:21137"/>
    </ligand>
</feature>
<feature type="binding site" evidence="1">
    <location>
        <position position="21"/>
    </location>
    <ligand>
        <name>[4Fe-4S] cluster</name>
        <dbReference type="ChEBI" id="CHEBI:49883"/>
    </ligand>
</feature>
<feature type="binding site" evidence="1">
    <location>
        <position position="40"/>
    </location>
    <ligand>
        <name>[4Fe-4S] cluster</name>
        <dbReference type="ChEBI" id="CHEBI:49883"/>
    </ligand>
</feature>
<feature type="binding site" evidence="1">
    <location>
        <position position="43"/>
    </location>
    <ligand>
        <name>[4Fe-4S] cluster</name>
        <dbReference type="ChEBI" id="CHEBI:49883"/>
    </ligand>
</feature>
<feature type="binding site" evidence="1">
    <location>
        <position position="46"/>
    </location>
    <ligand>
        <name>[4Fe-4S] cluster</name>
        <dbReference type="ChEBI" id="CHEBI:49883"/>
    </ligand>
</feature>
<feature type="binding site" evidence="1">
    <location>
        <position position="50"/>
    </location>
    <ligand>
        <name>[3Fe-4S] cluster</name>
        <dbReference type="ChEBI" id="CHEBI:21137"/>
    </ligand>
</feature>
<sequence length="112" mass="12679">MTYVVTDNCIACKYTDCVEVCPVDCFYEGENTLVIHPDECIDCGVCEPECPADAIRPDTEPGMEDWVEFNRTYASQWPVITIKKDPMPDHKKYDGETGKREKYFSPNPGTGD</sequence>
<accession>P0CY91</accession>
<accession>P18082</accession>
<evidence type="ECO:0000250" key="1"/>
<evidence type="ECO:0000255" key="2">
    <source>
        <dbReference type="PROSITE-ProRule" id="PRU00711"/>
    </source>
</evidence>
<evidence type="ECO:0000256" key="3">
    <source>
        <dbReference type="SAM" id="MobiDB-lite"/>
    </source>
</evidence>
<gene>
    <name type="primary">fdxA</name>
</gene>
<organism>
    <name type="scientific">Rhodobacter capsulatus</name>
    <name type="common">Rhodopseudomonas capsulata</name>
    <dbReference type="NCBI Taxonomy" id="1061"/>
    <lineage>
        <taxon>Bacteria</taxon>
        <taxon>Pseudomonadati</taxon>
        <taxon>Pseudomonadota</taxon>
        <taxon>Alphaproteobacteria</taxon>
        <taxon>Rhodobacterales</taxon>
        <taxon>Rhodobacter group</taxon>
        <taxon>Rhodobacter</taxon>
    </lineage>
</organism>
<protein>
    <recommendedName>
        <fullName>Ferredoxin-2</fullName>
    </recommendedName>
    <alternativeName>
        <fullName>Ferredoxin II</fullName>
        <shortName>FdII</shortName>
    </alternativeName>
</protein>
<dbReference type="EMBL" id="X53300">
    <property type="protein sequence ID" value="CAA37388.1"/>
    <property type="molecule type" value="Genomic_DNA"/>
</dbReference>
<dbReference type="PIR" id="S10976">
    <property type="entry name" value="FERF2C"/>
</dbReference>
<dbReference type="RefSeq" id="WP_013068498.1">
    <property type="nucleotide sequence ID" value="NZ_VIBE01000006.1"/>
</dbReference>
<dbReference type="SMR" id="P0CY91"/>
<dbReference type="GeneID" id="31491607"/>
<dbReference type="OMA" id="MTYIVND"/>
<dbReference type="GO" id="GO:0051538">
    <property type="term" value="F:3 iron, 4 sulfur cluster binding"/>
    <property type="evidence" value="ECO:0007669"/>
    <property type="project" value="UniProtKB-KW"/>
</dbReference>
<dbReference type="GO" id="GO:0051539">
    <property type="term" value="F:4 iron, 4 sulfur cluster binding"/>
    <property type="evidence" value="ECO:0007669"/>
    <property type="project" value="UniProtKB-KW"/>
</dbReference>
<dbReference type="GO" id="GO:0009055">
    <property type="term" value="F:electron transfer activity"/>
    <property type="evidence" value="ECO:0007669"/>
    <property type="project" value="InterPro"/>
</dbReference>
<dbReference type="GO" id="GO:0046872">
    <property type="term" value="F:metal ion binding"/>
    <property type="evidence" value="ECO:0007669"/>
    <property type="project" value="UniProtKB-KW"/>
</dbReference>
<dbReference type="Gene3D" id="3.30.70.20">
    <property type="match status" value="1"/>
</dbReference>
<dbReference type="InterPro" id="IPR017896">
    <property type="entry name" value="4Fe4S_Fe-S-bd"/>
</dbReference>
<dbReference type="InterPro" id="IPR017900">
    <property type="entry name" value="4Fe4S_Fe_S_CS"/>
</dbReference>
<dbReference type="InterPro" id="IPR000813">
    <property type="entry name" value="7Fe_ferredoxin"/>
</dbReference>
<dbReference type="InterPro" id="IPR022569">
    <property type="entry name" value="Fd_C"/>
</dbReference>
<dbReference type="InterPro" id="IPR054829">
    <property type="entry name" value="FdxA"/>
</dbReference>
<dbReference type="InterPro" id="IPR050294">
    <property type="entry name" value="RnfB_subfamily"/>
</dbReference>
<dbReference type="NCBIfam" id="NF045490">
    <property type="entry name" value="FdxA_Protbact"/>
    <property type="match status" value="1"/>
</dbReference>
<dbReference type="PANTHER" id="PTHR42859:SF2">
    <property type="entry name" value="FERREDOXIN"/>
    <property type="match status" value="1"/>
</dbReference>
<dbReference type="PANTHER" id="PTHR42859">
    <property type="entry name" value="OXIDOREDUCTASE"/>
    <property type="match status" value="1"/>
</dbReference>
<dbReference type="Pfam" id="PF11953">
    <property type="entry name" value="DUF3470"/>
    <property type="match status" value="1"/>
</dbReference>
<dbReference type="Pfam" id="PF00037">
    <property type="entry name" value="Fer4"/>
    <property type="match status" value="1"/>
</dbReference>
<dbReference type="PRINTS" id="PR00354">
    <property type="entry name" value="7FE8SFRDOXIN"/>
</dbReference>
<dbReference type="SUPFAM" id="SSF54862">
    <property type="entry name" value="4Fe-4S ferredoxins"/>
    <property type="match status" value="1"/>
</dbReference>
<dbReference type="PROSITE" id="PS00198">
    <property type="entry name" value="4FE4S_FER_1"/>
    <property type="match status" value="1"/>
</dbReference>
<dbReference type="PROSITE" id="PS51379">
    <property type="entry name" value="4FE4S_FER_2"/>
    <property type="match status" value="2"/>
</dbReference>
<keyword id="KW-0003">3Fe-4S</keyword>
<keyword id="KW-0004">4Fe-4S</keyword>
<keyword id="KW-0249">Electron transport</keyword>
<keyword id="KW-0408">Iron</keyword>
<keyword id="KW-0411">Iron-sulfur</keyword>
<keyword id="KW-0479">Metal-binding</keyword>
<keyword id="KW-0677">Repeat</keyword>
<keyword id="KW-0813">Transport</keyword>
<name>FER2_RHOCA</name>
<reference key="1">
    <citation type="journal article" date="1990" name="Nucleic Acids Res.">
        <title>Nucleotide sequence of fdxA encoding a 7Fe ferredoxin of Rhodobacter capsulatus.</title>
        <authorList>
            <person name="Duport C."/>
            <person name="Jouanneau Y."/>
            <person name="Vignais P.M."/>
        </authorList>
    </citation>
    <scope>NUCLEOTIDE SEQUENCE [GENOMIC DNA]</scope>
    <source>
        <strain>ATCC 33303 / B10</strain>
    </source>
</reference>